<protein>
    <recommendedName>
        <fullName evidence="1">Protein SIEVE ELEMENT OCCLUSION C</fullName>
        <shortName evidence="1">AtSEOc</shortName>
    </recommendedName>
</protein>
<feature type="chain" id="PRO_0000432875" description="Protein SIEVE ELEMENT OCCLUSION C">
    <location>
        <begin position="1"/>
        <end position="664"/>
    </location>
</feature>
<keyword id="KW-1185">Reference proteome</keyword>
<reference key="1">
    <citation type="journal article" date="2000" name="Nature">
        <title>Sequence and analysis of chromosome 1 of the plant Arabidopsis thaliana.</title>
        <authorList>
            <person name="Theologis A."/>
            <person name="Ecker J.R."/>
            <person name="Palm C.J."/>
            <person name="Federspiel N.A."/>
            <person name="Kaul S."/>
            <person name="White O."/>
            <person name="Alonso J."/>
            <person name="Altafi H."/>
            <person name="Araujo R."/>
            <person name="Bowman C.L."/>
            <person name="Brooks S.Y."/>
            <person name="Buehler E."/>
            <person name="Chan A."/>
            <person name="Chao Q."/>
            <person name="Chen H."/>
            <person name="Cheuk R.F."/>
            <person name="Chin C.W."/>
            <person name="Chung M.K."/>
            <person name="Conn L."/>
            <person name="Conway A.B."/>
            <person name="Conway A.R."/>
            <person name="Creasy T.H."/>
            <person name="Dewar K."/>
            <person name="Dunn P."/>
            <person name="Etgu P."/>
            <person name="Feldblyum T.V."/>
            <person name="Feng J.-D."/>
            <person name="Fong B."/>
            <person name="Fujii C.Y."/>
            <person name="Gill J.E."/>
            <person name="Goldsmith A.D."/>
            <person name="Haas B."/>
            <person name="Hansen N.F."/>
            <person name="Hughes B."/>
            <person name="Huizar L."/>
            <person name="Hunter J.L."/>
            <person name="Jenkins J."/>
            <person name="Johnson-Hopson C."/>
            <person name="Khan S."/>
            <person name="Khaykin E."/>
            <person name="Kim C.J."/>
            <person name="Koo H.L."/>
            <person name="Kremenetskaia I."/>
            <person name="Kurtz D.B."/>
            <person name="Kwan A."/>
            <person name="Lam B."/>
            <person name="Langin-Hooper S."/>
            <person name="Lee A."/>
            <person name="Lee J.M."/>
            <person name="Lenz C.A."/>
            <person name="Li J.H."/>
            <person name="Li Y.-P."/>
            <person name="Lin X."/>
            <person name="Liu S.X."/>
            <person name="Liu Z.A."/>
            <person name="Luros J.S."/>
            <person name="Maiti R."/>
            <person name="Marziali A."/>
            <person name="Militscher J."/>
            <person name="Miranda M."/>
            <person name="Nguyen M."/>
            <person name="Nierman W.C."/>
            <person name="Osborne B.I."/>
            <person name="Pai G."/>
            <person name="Peterson J."/>
            <person name="Pham P.K."/>
            <person name="Rizzo M."/>
            <person name="Rooney T."/>
            <person name="Rowley D."/>
            <person name="Sakano H."/>
            <person name="Salzberg S.L."/>
            <person name="Schwartz J.R."/>
            <person name="Shinn P."/>
            <person name="Southwick A.M."/>
            <person name="Sun H."/>
            <person name="Tallon L.J."/>
            <person name="Tambunga G."/>
            <person name="Toriumi M.J."/>
            <person name="Town C.D."/>
            <person name="Utterback T."/>
            <person name="Van Aken S."/>
            <person name="Vaysberg M."/>
            <person name="Vysotskaia V.S."/>
            <person name="Walker M."/>
            <person name="Wu D."/>
            <person name="Yu G."/>
            <person name="Fraser C.M."/>
            <person name="Venter J.C."/>
            <person name="Davis R.W."/>
        </authorList>
    </citation>
    <scope>NUCLEOTIDE SEQUENCE [LARGE SCALE GENOMIC DNA]</scope>
    <source>
        <strain>cv. Columbia</strain>
    </source>
</reference>
<reference key="2">
    <citation type="journal article" date="2017" name="Plant J.">
        <title>Araport11: a complete reannotation of the Arabidopsis thaliana reference genome.</title>
        <authorList>
            <person name="Cheng C.Y."/>
            <person name="Krishnakumar V."/>
            <person name="Chan A.P."/>
            <person name="Thibaud-Nissen F."/>
            <person name="Schobel S."/>
            <person name="Town C.D."/>
        </authorList>
    </citation>
    <scope>GENOME REANNOTATION</scope>
    <source>
        <strain>cv. Columbia</strain>
    </source>
</reference>
<reference key="3">
    <citation type="journal article" date="2010" name="BMC Plant Biol.">
        <title>Molecular and phylogenetic characterization of the sieve element occlusion gene family in Fabaceae and non-Fabaceae plants.</title>
        <authorList>
            <person name="Ruping B."/>
            <person name="Ernst A.M."/>
            <person name="Jekat S.B."/>
            <person name="Nordzieke S."/>
            <person name="Reineke A.R."/>
            <person name="Muller B."/>
            <person name="Bornberg-Bauer E."/>
            <person name="Prufer D."/>
            <person name="Noll G.A."/>
        </authorList>
    </citation>
    <scope>GENE FAMILY</scope>
    <scope>NOMENCLATURE</scope>
</reference>
<sequence length="664" mass="77122">MNFRRDISALNEDIIVEQLLRSHDPDGRWLDSEMLLQEVETILSFVLQNDVSRPLLTENCITTIEVFDSKETLPYAIFRISVQMLCPCTGENEIRKRTMVLFDLLKEYRWDAKAVLVLGVLAATYGGLLLPVHLAICDPVAASIAKLNQLPIERTKFRPWLESLNLLIKAMVDVTKCIIKFEKIPFKQAKLDNNILGETLSNIYLTTYRVVKSALTCMQQIPYFKQTQQAKKSRKTAAELSIESRRAAGELSSLGYQLLNIHTRLNKQVEDCSTQIEEEINQRLRNINIETHQDNQDVLHLLFSLQDDLPLQQYSRQISITEVQDKVTLLLLSKPPVEPLFFLLQQLYDHPSNTNTEQNYEIIWVPIPSSQKWTDEEKEIFDFYSNSLPWISVRQPWLMSSTILNFFKQEWHYKDNEAMLVVIDSNGRFVNMNAMDMVLIWGVKAYPFSVSREDELWKEHGWSINLLLDGIHPTFEGREICIFGSENLDWIDEFVSLARKIQNLGFQLELIYLSNQRRDERAMEESSILFSPTLQQLFWLRLESIERSKLKRIVIEPSKPDRVFEEVRNLLDFDYGKHRGWGIIGNGSTAETVDGEKMTERMRKIVRWGEYAKGLGFTEAIEIAAEKPCELSHTAVVPFEEALTMKVVTCEKCKWPMKRFVAYQ</sequence>
<gene>
    <name evidence="1" type="primary">SEOC</name>
    <name evidence="3" type="ordered locus">At1g67790</name>
    <name evidence="4" type="ORF">F12A21.8</name>
</gene>
<evidence type="ECO:0000303" key="1">
    <source>
    </source>
</evidence>
<evidence type="ECO:0000305" key="2"/>
<evidence type="ECO:0000312" key="3">
    <source>
        <dbReference type="Araport" id="AT1G67790"/>
    </source>
</evidence>
<evidence type="ECO:0000312" key="4">
    <source>
        <dbReference type="EMBL" id="AAG28888.1"/>
    </source>
</evidence>
<organism>
    <name type="scientific">Arabidopsis thaliana</name>
    <name type="common">Mouse-ear cress</name>
    <dbReference type="NCBI Taxonomy" id="3702"/>
    <lineage>
        <taxon>Eukaryota</taxon>
        <taxon>Viridiplantae</taxon>
        <taxon>Streptophyta</taxon>
        <taxon>Embryophyta</taxon>
        <taxon>Tracheophyta</taxon>
        <taxon>Spermatophyta</taxon>
        <taxon>Magnoliopsida</taxon>
        <taxon>eudicotyledons</taxon>
        <taxon>Gunneridae</taxon>
        <taxon>Pentapetalae</taxon>
        <taxon>rosids</taxon>
        <taxon>malvids</taxon>
        <taxon>Brassicales</taxon>
        <taxon>Brassicaceae</taxon>
        <taxon>Camelineae</taxon>
        <taxon>Arabidopsis</taxon>
    </lineage>
</organism>
<accession>Q9FXE2</accession>
<dbReference type="EMBL" id="AC008113">
    <property type="protein sequence ID" value="AAG28888.1"/>
    <property type="status" value="ALT_SEQ"/>
    <property type="molecule type" value="Genomic_DNA"/>
</dbReference>
<dbReference type="EMBL" id="CP002684">
    <property type="protein sequence ID" value="AEE34696.2"/>
    <property type="molecule type" value="Genomic_DNA"/>
</dbReference>
<dbReference type="RefSeq" id="NP_001319338.1">
    <property type="nucleotide sequence ID" value="NM_001334324.1"/>
</dbReference>
<dbReference type="SMR" id="Q9FXE2"/>
<dbReference type="ProteomicsDB" id="232674"/>
<dbReference type="EnsemblPlants" id="AT1G67790.1">
    <property type="protein sequence ID" value="AT1G67790.1"/>
    <property type="gene ID" value="AT1G67790"/>
</dbReference>
<dbReference type="GeneID" id="843105"/>
<dbReference type="Gramene" id="AT1G67790.1">
    <property type="protein sequence ID" value="AT1G67790.1"/>
    <property type="gene ID" value="AT1G67790"/>
</dbReference>
<dbReference type="KEGG" id="ath:AT1G67790"/>
<dbReference type="Araport" id="AT1G67790"/>
<dbReference type="TAIR" id="AT1G67790"/>
<dbReference type="eggNOG" id="ENOG502QQNR">
    <property type="taxonomic scope" value="Eukaryota"/>
</dbReference>
<dbReference type="HOGENOM" id="CLU_025476_0_0_1"/>
<dbReference type="InParanoid" id="Q9FXE2"/>
<dbReference type="OMA" id="ISHEILC"/>
<dbReference type="OrthoDB" id="1670392at2759"/>
<dbReference type="PRO" id="PR:Q9FXE2"/>
<dbReference type="Proteomes" id="UP000006548">
    <property type="component" value="Chromosome 1"/>
</dbReference>
<dbReference type="ExpressionAtlas" id="Q9FXE2">
    <property type="expression patterns" value="baseline and differential"/>
</dbReference>
<dbReference type="GO" id="GO:0010088">
    <property type="term" value="P:phloem development"/>
    <property type="evidence" value="ECO:0007669"/>
    <property type="project" value="InterPro"/>
</dbReference>
<dbReference type="InterPro" id="IPR027944">
    <property type="entry name" value="SEO_C"/>
</dbReference>
<dbReference type="InterPro" id="IPR027942">
    <property type="entry name" value="SEO_N"/>
</dbReference>
<dbReference type="InterPro" id="IPR039299">
    <property type="entry name" value="SEOA"/>
</dbReference>
<dbReference type="PANTHER" id="PTHR33232">
    <property type="entry name" value="PROTEIN SIEVE ELEMENT OCCLUSION B-LIKE"/>
    <property type="match status" value="1"/>
</dbReference>
<dbReference type="PANTHER" id="PTHR33232:SF11">
    <property type="entry name" value="PROTEIN SIEVE ELEMENT OCCLUSION C"/>
    <property type="match status" value="1"/>
</dbReference>
<dbReference type="Pfam" id="PF14577">
    <property type="entry name" value="SEO_C"/>
    <property type="match status" value="1"/>
</dbReference>
<dbReference type="Pfam" id="PF14576">
    <property type="entry name" value="SEO_N"/>
    <property type="match status" value="1"/>
</dbReference>
<proteinExistence type="predicted"/>
<comment type="sequence caution" evidence="2">
    <conflict type="erroneous gene model prediction">
        <sequence resource="EMBL-CDS" id="AAG28888"/>
    </conflict>
</comment>
<name>SEOC_ARATH</name>